<sequence>MWRESPERQQPLRTGLTTGTCATACALAAARLLLTGKSCDECEVTLPKGRKVRLPIAECRRLDVYSAYAATVKDAGDDPDVTHGAQVFVIASLGTGAGEVRFSAADGVGTVTRDGLSLAVGEPAINPTPRRMIREHLLELADECAYNGAFDVAVGVENGAALAQKTMNPRLGIVGGLSILGTTGIVRPFSCSAYIASIHQGVDVARANGYDHIAACTGNASEDYARRHYDLPDMALIEMGDFAGALLKYLRRSPLRRLTIVGGFGKISKLACGHLDLHSKASEIDLDFIADAAGSLGATPNTLAAMRAANTSIEALRLAGDLPLGDLICRRAWEKAAYTMHNSMQLEVVAIDRQGLPVGAYAGEDL</sequence>
<protein>
    <recommendedName>
        <fullName evidence="1">Cobalt-precorrin-5B C(1)-methyltransferase</fullName>
        <ecNumber evidence="1">2.1.1.195</ecNumber>
    </recommendedName>
    <alternativeName>
        <fullName evidence="1">Cobalt-precorrin-6A synthase</fullName>
    </alternativeName>
</protein>
<organism>
    <name type="scientific">Hahella chejuensis (strain KCTC 2396)</name>
    <dbReference type="NCBI Taxonomy" id="349521"/>
    <lineage>
        <taxon>Bacteria</taxon>
        <taxon>Pseudomonadati</taxon>
        <taxon>Pseudomonadota</taxon>
        <taxon>Gammaproteobacteria</taxon>
        <taxon>Oceanospirillales</taxon>
        <taxon>Hahellaceae</taxon>
        <taxon>Hahella</taxon>
    </lineage>
</organism>
<reference key="1">
    <citation type="journal article" date="2005" name="Nucleic Acids Res.">
        <title>Genomic blueprint of Hahella chejuensis, a marine microbe producing an algicidal agent.</title>
        <authorList>
            <person name="Jeong H."/>
            <person name="Yim J.H."/>
            <person name="Lee C."/>
            <person name="Choi S.-H."/>
            <person name="Park Y.K."/>
            <person name="Yoon S.H."/>
            <person name="Hur C.-G."/>
            <person name="Kang H.-Y."/>
            <person name="Kim D."/>
            <person name="Lee H.H."/>
            <person name="Park K.H."/>
            <person name="Park S.-H."/>
            <person name="Park H.-S."/>
            <person name="Lee H.K."/>
            <person name="Oh T.K."/>
            <person name="Kim J.F."/>
        </authorList>
    </citation>
    <scope>NUCLEOTIDE SEQUENCE [LARGE SCALE GENOMIC DNA]</scope>
    <source>
        <strain>KCTC 2396</strain>
    </source>
</reference>
<dbReference type="EC" id="2.1.1.195" evidence="1"/>
<dbReference type="EMBL" id="CP000155">
    <property type="protein sequence ID" value="ABC33112.1"/>
    <property type="molecule type" value="Genomic_DNA"/>
</dbReference>
<dbReference type="RefSeq" id="WP_011400164.1">
    <property type="nucleotide sequence ID" value="NC_007645.1"/>
</dbReference>
<dbReference type="SMR" id="Q2S8B2"/>
<dbReference type="STRING" id="349521.HCH_06469"/>
<dbReference type="KEGG" id="hch:HCH_06469"/>
<dbReference type="eggNOG" id="COG1903">
    <property type="taxonomic scope" value="Bacteria"/>
</dbReference>
<dbReference type="HOGENOM" id="CLU_041273_0_0_6"/>
<dbReference type="OrthoDB" id="6439987at2"/>
<dbReference type="UniPathway" id="UPA00148">
    <property type="reaction ID" value="UER00227"/>
</dbReference>
<dbReference type="Proteomes" id="UP000000238">
    <property type="component" value="Chromosome"/>
</dbReference>
<dbReference type="GO" id="GO:0043780">
    <property type="term" value="F:cobalt-precorrin-5B C1-methyltransferase activity"/>
    <property type="evidence" value="ECO:0007669"/>
    <property type="project" value="RHEA"/>
</dbReference>
<dbReference type="GO" id="GO:0019251">
    <property type="term" value="P:anaerobic cobalamin biosynthetic process"/>
    <property type="evidence" value="ECO:0007669"/>
    <property type="project" value="UniProtKB-UniRule"/>
</dbReference>
<dbReference type="GO" id="GO:0032259">
    <property type="term" value="P:methylation"/>
    <property type="evidence" value="ECO:0007669"/>
    <property type="project" value="UniProtKB-KW"/>
</dbReference>
<dbReference type="Gene3D" id="3.30.2110.10">
    <property type="entry name" value="CbiD-like"/>
    <property type="match status" value="1"/>
</dbReference>
<dbReference type="HAMAP" id="MF_00787">
    <property type="entry name" value="CbiD"/>
    <property type="match status" value="1"/>
</dbReference>
<dbReference type="InterPro" id="IPR002748">
    <property type="entry name" value="CbiD"/>
</dbReference>
<dbReference type="InterPro" id="IPR036074">
    <property type="entry name" value="CbiD_sf"/>
</dbReference>
<dbReference type="NCBIfam" id="TIGR00312">
    <property type="entry name" value="cbiD"/>
    <property type="match status" value="1"/>
</dbReference>
<dbReference type="NCBIfam" id="NF000849">
    <property type="entry name" value="PRK00075.1-1"/>
    <property type="match status" value="1"/>
</dbReference>
<dbReference type="PANTHER" id="PTHR35863">
    <property type="entry name" value="COBALT-PRECORRIN-5B C(1)-METHYLTRANSFERASE"/>
    <property type="match status" value="1"/>
</dbReference>
<dbReference type="PANTHER" id="PTHR35863:SF1">
    <property type="entry name" value="COBALT-PRECORRIN-5B C(1)-METHYLTRANSFERASE"/>
    <property type="match status" value="1"/>
</dbReference>
<dbReference type="Pfam" id="PF01888">
    <property type="entry name" value="CbiD"/>
    <property type="match status" value="1"/>
</dbReference>
<dbReference type="PIRSF" id="PIRSF026782">
    <property type="entry name" value="CbiD"/>
    <property type="match status" value="1"/>
</dbReference>
<dbReference type="SUPFAM" id="SSF111342">
    <property type="entry name" value="CbiD-like"/>
    <property type="match status" value="1"/>
</dbReference>
<comment type="function">
    <text evidence="1">Catalyzes the methylation of C-1 in cobalt-precorrin-5B to form cobalt-precorrin-6A.</text>
</comment>
<comment type="catalytic activity">
    <reaction evidence="1">
        <text>Co-precorrin-5B + S-adenosyl-L-methionine = Co-precorrin-6A + S-adenosyl-L-homocysteine</text>
        <dbReference type="Rhea" id="RHEA:26285"/>
        <dbReference type="ChEBI" id="CHEBI:57856"/>
        <dbReference type="ChEBI" id="CHEBI:59789"/>
        <dbReference type="ChEBI" id="CHEBI:60063"/>
        <dbReference type="ChEBI" id="CHEBI:60064"/>
        <dbReference type="EC" id="2.1.1.195"/>
    </reaction>
</comment>
<comment type="pathway">
    <text evidence="1">Cofactor biosynthesis; adenosylcobalamin biosynthesis; cob(II)yrinate a,c-diamide from sirohydrochlorin (anaerobic route): step 6/10.</text>
</comment>
<comment type="similarity">
    <text evidence="1">Belongs to the CbiD family.</text>
</comment>
<keyword id="KW-0169">Cobalamin biosynthesis</keyword>
<keyword id="KW-0489">Methyltransferase</keyword>
<keyword id="KW-1185">Reference proteome</keyword>
<keyword id="KW-0949">S-adenosyl-L-methionine</keyword>
<keyword id="KW-0808">Transferase</keyword>
<accession>Q2S8B2</accession>
<evidence type="ECO:0000255" key="1">
    <source>
        <dbReference type="HAMAP-Rule" id="MF_00787"/>
    </source>
</evidence>
<proteinExistence type="inferred from homology"/>
<gene>
    <name evidence="1" type="primary">cbiD</name>
    <name type="ordered locus">HCH_06469</name>
</gene>
<feature type="chain" id="PRO_0000257764" description="Cobalt-precorrin-5B C(1)-methyltransferase">
    <location>
        <begin position="1"/>
        <end position="366"/>
    </location>
</feature>
<name>CBID_HAHCH</name>